<name>CAP13_ARATH</name>
<feature type="chain" id="PRO_0000187079" description="Putative clathrin assembly protein At1g25240">
    <location>
        <begin position="1"/>
        <end position="376"/>
    </location>
</feature>
<feature type="domain" description="ENTH" evidence="2">
    <location>
        <begin position="25"/>
        <end position="156"/>
    </location>
</feature>
<sequence>MKLWKRASGALKDRKTLFTIGFSRKTSFRNPDLDSAIIHATSHDDSSVDYHNAHRVYKWIRSSPANLKPLVHALSSRVNRTRSWIVALKALMLVHGVLCCKVTSLQEIRRLPFDLSDFSDGHSRPSKTWGFNAFIRAYFSFLDQYSFFLSDQIRRRHKKPQLDSVNQELERIEKLQSLLHMLLQIRPMADNMKKTLILEAMDCVVIEIFDIYGRICSAIAKLLIKIHPAAGKAEAVIALKIVKKATSQGEDLALYFEFCKEFGVSNAHDIPKFVTIPEEDIKAIEKVINGVEEEEVKKKEDEVEEEKSIILVERPELQTIITDKWEIFEDDFCFTCKDIKETDQHRKFNMDPSPLPLIVIDEPVYFTHTLPDLITF</sequence>
<reference key="1">
    <citation type="journal article" date="2000" name="Nature">
        <title>Sequence and analysis of chromosome 1 of the plant Arabidopsis thaliana.</title>
        <authorList>
            <person name="Theologis A."/>
            <person name="Ecker J.R."/>
            <person name="Palm C.J."/>
            <person name="Federspiel N.A."/>
            <person name="Kaul S."/>
            <person name="White O."/>
            <person name="Alonso J."/>
            <person name="Altafi H."/>
            <person name="Araujo R."/>
            <person name="Bowman C.L."/>
            <person name="Brooks S.Y."/>
            <person name="Buehler E."/>
            <person name="Chan A."/>
            <person name="Chao Q."/>
            <person name="Chen H."/>
            <person name="Cheuk R.F."/>
            <person name="Chin C.W."/>
            <person name="Chung M.K."/>
            <person name="Conn L."/>
            <person name="Conway A.B."/>
            <person name="Conway A.R."/>
            <person name="Creasy T.H."/>
            <person name="Dewar K."/>
            <person name="Dunn P."/>
            <person name="Etgu P."/>
            <person name="Feldblyum T.V."/>
            <person name="Feng J.-D."/>
            <person name="Fong B."/>
            <person name="Fujii C.Y."/>
            <person name="Gill J.E."/>
            <person name="Goldsmith A.D."/>
            <person name="Haas B."/>
            <person name="Hansen N.F."/>
            <person name="Hughes B."/>
            <person name="Huizar L."/>
            <person name="Hunter J.L."/>
            <person name="Jenkins J."/>
            <person name="Johnson-Hopson C."/>
            <person name="Khan S."/>
            <person name="Khaykin E."/>
            <person name="Kim C.J."/>
            <person name="Koo H.L."/>
            <person name="Kremenetskaia I."/>
            <person name="Kurtz D.B."/>
            <person name="Kwan A."/>
            <person name="Lam B."/>
            <person name="Langin-Hooper S."/>
            <person name="Lee A."/>
            <person name="Lee J.M."/>
            <person name="Lenz C.A."/>
            <person name="Li J.H."/>
            <person name="Li Y.-P."/>
            <person name="Lin X."/>
            <person name="Liu S.X."/>
            <person name="Liu Z.A."/>
            <person name="Luros J.S."/>
            <person name="Maiti R."/>
            <person name="Marziali A."/>
            <person name="Militscher J."/>
            <person name="Miranda M."/>
            <person name="Nguyen M."/>
            <person name="Nierman W.C."/>
            <person name="Osborne B.I."/>
            <person name="Pai G."/>
            <person name="Peterson J."/>
            <person name="Pham P.K."/>
            <person name="Rizzo M."/>
            <person name="Rooney T."/>
            <person name="Rowley D."/>
            <person name="Sakano H."/>
            <person name="Salzberg S.L."/>
            <person name="Schwartz J.R."/>
            <person name="Shinn P."/>
            <person name="Southwick A.M."/>
            <person name="Sun H."/>
            <person name="Tallon L.J."/>
            <person name="Tambunga G."/>
            <person name="Toriumi M.J."/>
            <person name="Town C.D."/>
            <person name="Utterback T."/>
            <person name="Van Aken S."/>
            <person name="Vaysberg M."/>
            <person name="Vysotskaia V.S."/>
            <person name="Walker M."/>
            <person name="Wu D."/>
            <person name="Yu G."/>
            <person name="Fraser C.M."/>
            <person name="Venter J.C."/>
            <person name="Davis R.W."/>
        </authorList>
    </citation>
    <scope>NUCLEOTIDE SEQUENCE [LARGE SCALE GENOMIC DNA]</scope>
    <source>
        <strain>cv. Columbia</strain>
    </source>
</reference>
<reference key="2">
    <citation type="journal article" date="2017" name="Plant J.">
        <title>Araport11: a complete reannotation of the Arabidopsis thaliana reference genome.</title>
        <authorList>
            <person name="Cheng C.Y."/>
            <person name="Krishnakumar V."/>
            <person name="Chan A.P."/>
            <person name="Thibaud-Nissen F."/>
            <person name="Schobel S."/>
            <person name="Town C.D."/>
        </authorList>
    </citation>
    <scope>GENOME REANNOTATION</scope>
    <source>
        <strain>cv. Columbia</strain>
    </source>
</reference>
<keyword id="KW-0168">Coated pit</keyword>
<keyword id="KW-0968">Cytoplasmic vesicle</keyword>
<keyword id="KW-0254">Endocytosis</keyword>
<keyword id="KW-0333">Golgi apparatus</keyword>
<keyword id="KW-0472">Membrane</keyword>
<keyword id="KW-1185">Reference proteome</keyword>
<protein>
    <recommendedName>
        <fullName>Putative clathrin assembly protein At1g25240</fullName>
    </recommendedName>
</protein>
<gene>
    <name type="ordered locus">At1g25240</name>
    <name type="ORF">F4F7.37</name>
</gene>
<evidence type="ECO:0000250" key="1"/>
<evidence type="ECO:0000255" key="2">
    <source>
        <dbReference type="PROSITE-ProRule" id="PRU00243"/>
    </source>
</evidence>
<accession>Q9FRH3</accession>
<comment type="subcellular location">
    <subcellularLocation>
        <location evidence="1">Membrane</location>
        <location evidence="1">Clathrin-coated pit</location>
    </subcellularLocation>
    <subcellularLocation>
        <location evidence="1">Golgi apparatus</location>
    </subcellularLocation>
    <subcellularLocation>
        <location evidence="1">Cytoplasmic vesicle</location>
        <location evidence="1">Clathrin-coated vesicle</location>
    </subcellularLocation>
    <text evidence="1">Colocalized with clathrin in the Golgi area.</text>
</comment>
<organism>
    <name type="scientific">Arabidopsis thaliana</name>
    <name type="common">Mouse-ear cress</name>
    <dbReference type="NCBI Taxonomy" id="3702"/>
    <lineage>
        <taxon>Eukaryota</taxon>
        <taxon>Viridiplantae</taxon>
        <taxon>Streptophyta</taxon>
        <taxon>Embryophyta</taxon>
        <taxon>Tracheophyta</taxon>
        <taxon>Spermatophyta</taxon>
        <taxon>Magnoliopsida</taxon>
        <taxon>eudicotyledons</taxon>
        <taxon>Gunneridae</taxon>
        <taxon>Pentapetalae</taxon>
        <taxon>rosids</taxon>
        <taxon>malvids</taxon>
        <taxon>Brassicales</taxon>
        <taxon>Brassicaceae</taxon>
        <taxon>Camelineae</taxon>
        <taxon>Arabidopsis</taxon>
    </lineage>
</organism>
<dbReference type="EMBL" id="AC079374">
    <property type="protein sequence ID" value="AAG28817.1"/>
    <property type="molecule type" value="Genomic_DNA"/>
</dbReference>
<dbReference type="EMBL" id="CP002684">
    <property type="protein sequence ID" value="AEE30592.1"/>
    <property type="molecule type" value="Genomic_DNA"/>
</dbReference>
<dbReference type="PIR" id="A86382">
    <property type="entry name" value="A86382"/>
</dbReference>
<dbReference type="RefSeq" id="NP_173895.1">
    <property type="nucleotide sequence ID" value="NM_102333.2"/>
</dbReference>
<dbReference type="SMR" id="Q9FRH3"/>
<dbReference type="STRING" id="3702.Q9FRH3"/>
<dbReference type="PaxDb" id="3702-AT1G25240.1"/>
<dbReference type="ProteomicsDB" id="240569"/>
<dbReference type="EnsemblPlants" id="AT1G25240.1">
    <property type="protein sequence ID" value="AT1G25240.1"/>
    <property type="gene ID" value="AT1G25240"/>
</dbReference>
<dbReference type="GeneID" id="839107"/>
<dbReference type="Gramene" id="AT1G25240.1">
    <property type="protein sequence ID" value="AT1G25240.1"/>
    <property type="gene ID" value="AT1G25240"/>
</dbReference>
<dbReference type="KEGG" id="ath:AT1G25240"/>
<dbReference type="Araport" id="AT1G25240"/>
<dbReference type="TAIR" id="AT1G25240">
    <property type="gene designation" value="PICALM9A"/>
</dbReference>
<dbReference type="eggNOG" id="KOG0251">
    <property type="taxonomic scope" value="Eukaryota"/>
</dbReference>
<dbReference type="HOGENOM" id="CLU_057422_1_0_1"/>
<dbReference type="InParanoid" id="Q9FRH3"/>
<dbReference type="OMA" id="SNAHEIP"/>
<dbReference type="PhylomeDB" id="Q9FRH3"/>
<dbReference type="PRO" id="PR:Q9FRH3"/>
<dbReference type="Proteomes" id="UP000006548">
    <property type="component" value="Chromosome 1"/>
</dbReference>
<dbReference type="ExpressionAtlas" id="Q9FRH3">
    <property type="expression patterns" value="baseline and differential"/>
</dbReference>
<dbReference type="GO" id="GO:0005905">
    <property type="term" value="C:clathrin-coated pit"/>
    <property type="evidence" value="ECO:0007669"/>
    <property type="project" value="UniProtKB-SubCell"/>
</dbReference>
<dbReference type="GO" id="GO:0030136">
    <property type="term" value="C:clathrin-coated vesicle"/>
    <property type="evidence" value="ECO:0007669"/>
    <property type="project" value="UniProtKB-SubCell"/>
</dbReference>
<dbReference type="GO" id="GO:0005794">
    <property type="term" value="C:Golgi apparatus"/>
    <property type="evidence" value="ECO:0007669"/>
    <property type="project" value="UniProtKB-SubCell"/>
</dbReference>
<dbReference type="GO" id="GO:0005545">
    <property type="term" value="F:1-phosphatidylinositol binding"/>
    <property type="evidence" value="ECO:0007669"/>
    <property type="project" value="InterPro"/>
</dbReference>
<dbReference type="GO" id="GO:0030276">
    <property type="term" value="F:clathrin binding"/>
    <property type="evidence" value="ECO:0007669"/>
    <property type="project" value="InterPro"/>
</dbReference>
<dbReference type="GO" id="GO:0048268">
    <property type="term" value="P:clathrin coat assembly"/>
    <property type="evidence" value="ECO:0007669"/>
    <property type="project" value="InterPro"/>
</dbReference>
<dbReference type="GO" id="GO:0072583">
    <property type="term" value="P:clathrin-dependent endocytosis"/>
    <property type="evidence" value="ECO:0007669"/>
    <property type="project" value="InterPro"/>
</dbReference>
<dbReference type="CDD" id="cd16987">
    <property type="entry name" value="ANTH_N_AP180_plant"/>
    <property type="match status" value="1"/>
</dbReference>
<dbReference type="FunFam" id="1.20.58.150:FF:000007">
    <property type="entry name" value="Putative clathrin assembly protein"/>
    <property type="match status" value="1"/>
</dbReference>
<dbReference type="FunFam" id="1.25.40.90:FF:000027">
    <property type="entry name" value="Putative clathrin assembly protein"/>
    <property type="match status" value="1"/>
</dbReference>
<dbReference type="Gene3D" id="1.25.40.90">
    <property type="match status" value="1"/>
</dbReference>
<dbReference type="Gene3D" id="1.20.58.150">
    <property type="entry name" value="ANTH domain"/>
    <property type="match status" value="1"/>
</dbReference>
<dbReference type="InterPro" id="IPR011417">
    <property type="entry name" value="ANTH_dom"/>
</dbReference>
<dbReference type="InterPro" id="IPR014712">
    <property type="entry name" value="ANTH_dom_sf"/>
</dbReference>
<dbReference type="InterPro" id="IPR048050">
    <property type="entry name" value="ANTH_N_plant"/>
</dbReference>
<dbReference type="InterPro" id="IPR045192">
    <property type="entry name" value="AP180-like"/>
</dbReference>
<dbReference type="InterPro" id="IPR013809">
    <property type="entry name" value="ENTH"/>
</dbReference>
<dbReference type="InterPro" id="IPR008942">
    <property type="entry name" value="ENTH_VHS"/>
</dbReference>
<dbReference type="PANTHER" id="PTHR22951">
    <property type="entry name" value="CLATHRIN ASSEMBLY PROTEIN"/>
    <property type="match status" value="1"/>
</dbReference>
<dbReference type="PANTHER" id="PTHR22951:SF19">
    <property type="entry name" value="OS08G0467300 PROTEIN"/>
    <property type="match status" value="1"/>
</dbReference>
<dbReference type="Pfam" id="PF07651">
    <property type="entry name" value="ANTH"/>
    <property type="match status" value="1"/>
</dbReference>
<dbReference type="SMART" id="SM00273">
    <property type="entry name" value="ENTH"/>
    <property type="match status" value="1"/>
</dbReference>
<dbReference type="SUPFAM" id="SSF48464">
    <property type="entry name" value="ENTH/VHS domain"/>
    <property type="match status" value="1"/>
</dbReference>
<dbReference type="SUPFAM" id="SSF89009">
    <property type="entry name" value="GAT-like domain"/>
    <property type="match status" value="1"/>
</dbReference>
<dbReference type="PROSITE" id="PS50942">
    <property type="entry name" value="ENTH"/>
    <property type="match status" value="1"/>
</dbReference>
<proteinExistence type="inferred from homology"/>